<reference key="1">
    <citation type="journal article" date="2006" name="Proc. Natl. Acad. Sci. U.S.A.">
        <title>Molecular genetic anatomy of inter- and intraserotype variation in the human bacterial pathogen group A Streptococcus.</title>
        <authorList>
            <person name="Beres S.B."/>
            <person name="Richter E.W."/>
            <person name="Nagiec M.J."/>
            <person name="Sumby P."/>
            <person name="Porcella S.F."/>
            <person name="DeLeo F.R."/>
            <person name="Musser J.M."/>
        </authorList>
    </citation>
    <scope>NUCLEOTIDE SEQUENCE [LARGE SCALE GENOMIC DNA]</scope>
    <source>
        <strain>MGAS2096</strain>
    </source>
</reference>
<name>RUVA_STRPB</name>
<feature type="chain" id="PRO_1000002567" description="Holliday junction branch migration complex subunit RuvA">
    <location>
        <begin position="1"/>
        <end position="198"/>
    </location>
</feature>
<feature type="region of interest" description="Domain I" evidence="1">
    <location>
        <begin position="1"/>
        <end position="63"/>
    </location>
</feature>
<feature type="region of interest" description="Domain II" evidence="1">
    <location>
        <begin position="64"/>
        <end position="142"/>
    </location>
</feature>
<feature type="region of interest" description="Flexible linker" evidence="1">
    <location>
        <begin position="143"/>
        <end position="147"/>
    </location>
</feature>
<feature type="region of interest" description="Domain III" evidence="1">
    <location>
        <begin position="148"/>
        <end position="198"/>
    </location>
</feature>
<protein>
    <recommendedName>
        <fullName evidence="1">Holliday junction branch migration complex subunit RuvA</fullName>
    </recommendedName>
</protein>
<keyword id="KW-0963">Cytoplasm</keyword>
<keyword id="KW-0227">DNA damage</keyword>
<keyword id="KW-0233">DNA recombination</keyword>
<keyword id="KW-0234">DNA repair</keyword>
<keyword id="KW-0238">DNA-binding</keyword>
<proteinExistence type="inferred from homology"/>
<sequence length="198" mass="21841">MYDYIKGQLTKITAKYIVVETNGLGYIINVANPYSFTDSVNQLVTIYLHQVIREDAHLLFGFHTEDEKDVFLKLISVSGIGPTTALAIVAVDDNEGLVNAIDNSDIKYLMKFPKIGKKTAQQMVLDLAGKFVEAPQETGNTKARSNKAGNTQLDEAIEALLALGYKATELKKIRAFFEGTSETAEQYIKSALKLLMKG</sequence>
<evidence type="ECO:0000255" key="1">
    <source>
        <dbReference type="HAMAP-Rule" id="MF_00031"/>
    </source>
</evidence>
<dbReference type="EMBL" id="CP000261">
    <property type="protein sequence ID" value="ABF36887.1"/>
    <property type="molecule type" value="Genomic_DNA"/>
</dbReference>
<dbReference type="SMR" id="Q1J9C4"/>
<dbReference type="KEGG" id="spj:MGAS2096_Spy1835"/>
<dbReference type="HOGENOM" id="CLU_087936_1_0_9"/>
<dbReference type="GO" id="GO:0005737">
    <property type="term" value="C:cytoplasm"/>
    <property type="evidence" value="ECO:0007669"/>
    <property type="project" value="UniProtKB-SubCell"/>
</dbReference>
<dbReference type="GO" id="GO:0009379">
    <property type="term" value="C:Holliday junction helicase complex"/>
    <property type="evidence" value="ECO:0007669"/>
    <property type="project" value="InterPro"/>
</dbReference>
<dbReference type="GO" id="GO:0048476">
    <property type="term" value="C:Holliday junction resolvase complex"/>
    <property type="evidence" value="ECO:0007669"/>
    <property type="project" value="UniProtKB-UniRule"/>
</dbReference>
<dbReference type="GO" id="GO:0005524">
    <property type="term" value="F:ATP binding"/>
    <property type="evidence" value="ECO:0007669"/>
    <property type="project" value="InterPro"/>
</dbReference>
<dbReference type="GO" id="GO:0000400">
    <property type="term" value="F:four-way junction DNA binding"/>
    <property type="evidence" value="ECO:0007669"/>
    <property type="project" value="UniProtKB-UniRule"/>
</dbReference>
<dbReference type="GO" id="GO:0009378">
    <property type="term" value="F:four-way junction helicase activity"/>
    <property type="evidence" value="ECO:0007669"/>
    <property type="project" value="InterPro"/>
</dbReference>
<dbReference type="GO" id="GO:0006310">
    <property type="term" value="P:DNA recombination"/>
    <property type="evidence" value="ECO:0007669"/>
    <property type="project" value="UniProtKB-UniRule"/>
</dbReference>
<dbReference type="GO" id="GO:0006281">
    <property type="term" value="P:DNA repair"/>
    <property type="evidence" value="ECO:0007669"/>
    <property type="project" value="UniProtKB-UniRule"/>
</dbReference>
<dbReference type="CDD" id="cd14332">
    <property type="entry name" value="UBA_RuvA_C"/>
    <property type="match status" value="1"/>
</dbReference>
<dbReference type="Gene3D" id="1.10.150.20">
    <property type="entry name" value="5' to 3' exonuclease, C-terminal subdomain"/>
    <property type="match status" value="1"/>
</dbReference>
<dbReference type="Gene3D" id="1.10.8.10">
    <property type="entry name" value="DNA helicase RuvA subunit, C-terminal domain"/>
    <property type="match status" value="1"/>
</dbReference>
<dbReference type="Gene3D" id="2.40.50.140">
    <property type="entry name" value="Nucleic acid-binding proteins"/>
    <property type="match status" value="1"/>
</dbReference>
<dbReference type="HAMAP" id="MF_00031">
    <property type="entry name" value="DNA_HJ_migration_RuvA"/>
    <property type="match status" value="1"/>
</dbReference>
<dbReference type="InterPro" id="IPR013849">
    <property type="entry name" value="DNA_helicase_Holl-junc_RuvA_I"/>
</dbReference>
<dbReference type="InterPro" id="IPR003583">
    <property type="entry name" value="Hlx-hairpin-Hlx_DNA-bd_motif"/>
</dbReference>
<dbReference type="InterPro" id="IPR012340">
    <property type="entry name" value="NA-bd_OB-fold"/>
</dbReference>
<dbReference type="InterPro" id="IPR000085">
    <property type="entry name" value="RuvA"/>
</dbReference>
<dbReference type="InterPro" id="IPR010994">
    <property type="entry name" value="RuvA_2-like"/>
</dbReference>
<dbReference type="InterPro" id="IPR011114">
    <property type="entry name" value="RuvA_C"/>
</dbReference>
<dbReference type="InterPro" id="IPR036267">
    <property type="entry name" value="RuvA_C_sf"/>
</dbReference>
<dbReference type="NCBIfam" id="TIGR00084">
    <property type="entry name" value="ruvA"/>
    <property type="match status" value="1"/>
</dbReference>
<dbReference type="Pfam" id="PF14520">
    <property type="entry name" value="HHH_5"/>
    <property type="match status" value="1"/>
</dbReference>
<dbReference type="Pfam" id="PF07499">
    <property type="entry name" value="RuvA_C"/>
    <property type="match status" value="1"/>
</dbReference>
<dbReference type="Pfam" id="PF01330">
    <property type="entry name" value="RuvA_N"/>
    <property type="match status" value="1"/>
</dbReference>
<dbReference type="SMART" id="SM00278">
    <property type="entry name" value="HhH1"/>
    <property type="match status" value="2"/>
</dbReference>
<dbReference type="SUPFAM" id="SSF46929">
    <property type="entry name" value="DNA helicase RuvA subunit, C-terminal domain"/>
    <property type="match status" value="1"/>
</dbReference>
<dbReference type="SUPFAM" id="SSF50249">
    <property type="entry name" value="Nucleic acid-binding proteins"/>
    <property type="match status" value="1"/>
</dbReference>
<dbReference type="SUPFAM" id="SSF47781">
    <property type="entry name" value="RuvA domain 2-like"/>
    <property type="match status" value="1"/>
</dbReference>
<accession>Q1J9C4</accession>
<gene>
    <name evidence="1" type="primary">ruvA</name>
    <name type="ordered locus">MGAS2096_Spy1835</name>
</gene>
<comment type="function">
    <text evidence="1">The RuvA-RuvB-RuvC complex processes Holliday junction (HJ) DNA during genetic recombination and DNA repair, while the RuvA-RuvB complex plays an important role in the rescue of blocked DNA replication forks via replication fork reversal (RFR). RuvA specifically binds to HJ cruciform DNA, conferring on it an open structure. The RuvB hexamer acts as an ATP-dependent pump, pulling dsDNA into and through the RuvAB complex. HJ branch migration allows RuvC to scan DNA until it finds its consensus sequence, where it cleaves and resolves the cruciform DNA.</text>
</comment>
<comment type="subunit">
    <text evidence="1">Homotetramer. Forms an RuvA(8)-RuvB(12)-Holliday junction (HJ) complex. HJ DNA is sandwiched between 2 RuvA tetramers; dsDNA enters through RuvA and exits via RuvB. An RuvB hexamer assembles on each DNA strand where it exits the tetramer. Each RuvB hexamer is contacted by two RuvA subunits (via domain III) on 2 adjacent RuvB subunits; this complex drives branch migration. In the full resolvosome a probable DNA-RuvA(4)-RuvB(12)-RuvC(2) complex forms which resolves the HJ.</text>
</comment>
<comment type="subcellular location">
    <subcellularLocation>
        <location evidence="1">Cytoplasm</location>
    </subcellularLocation>
</comment>
<comment type="domain">
    <text evidence="1">Has three domains with a flexible linker between the domains II and III and assumes an 'L' shape. Domain III is highly mobile and contacts RuvB.</text>
</comment>
<comment type="similarity">
    <text evidence="1">Belongs to the RuvA family.</text>
</comment>
<organism>
    <name type="scientific">Streptococcus pyogenes serotype M12 (strain MGAS2096)</name>
    <dbReference type="NCBI Taxonomy" id="370553"/>
    <lineage>
        <taxon>Bacteria</taxon>
        <taxon>Bacillati</taxon>
        <taxon>Bacillota</taxon>
        <taxon>Bacilli</taxon>
        <taxon>Lactobacillales</taxon>
        <taxon>Streptococcaceae</taxon>
        <taxon>Streptococcus</taxon>
    </lineage>
</organism>